<name>DPO41_MYCTU</name>
<keyword id="KW-0002">3D-structure</keyword>
<keyword id="KW-0963">Cytoplasm</keyword>
<keyword id="KW-0227">DNA damage</keyword>
<keyword id="KW-0234">DNA repair</keyword>
<keyword id="KW-0235">DNA replication</keyword>
<keyword id="KW-0238">DNA-binding</keyword>
<keyword id="KW-0239">DNA-directed DNA polymerase</keyword>
<keyword id="KW-0460">Magnesium</keyword>
<keyword id="KW-0479">Metal-binding</keyword>
<keyword id="KW-0515">Mutator protein</keyword>
<keyword id="KW-0548">Nucleotidyltransferase</keyword>
<keyword id="KW-1185">Reference proteome</keyword>
<keyword id="KW-0808">Transferase</keyword>
<evidence type="ECO:0000250" key="1"/>
<evidence type="ECO:0000305" key="2"/>
<dbReference type="EC" id="2.7.7.7"/>
<dbReference type="EMBL" id="AL123456">
    <property type="protein sequence ID" value="CCP44301.1"/>
    <property type="status" value="ALT_INIT"/>
    <property type="molecule type" value="Genomic_DNA"/>
</dbReference>
<dbReference type="PIR" id="F70760">
    <property type="entry name" value="F70760"/>
</dbReference>
<dbReference type="RefSeq" id="NP_216053.3">
    <property type="nucleotide sequence ID" value="NC_000962.3"/>
</dbReference>
<dbReference type="PDB" id="8DK9">
    <property type="method" value="X-ray"/>
    <property type="resolution" value="2.50 A"/>
    <property type="chains" value="E/F/G/H=348-353"/>
</dbReference>
<dbReference type="PDBsum" id="8DK9"/>
<dbReference type="SMR" id="P9WNT3"/>
<dbReference type="FunCoup" id="P9WNT3">
    <property type="interactions" value="308"/>
</dbReference>
<dbReference type="IntAct" id="P9WNT3">
    <property type="interactions" value="1"/>
</dbReference>
<dbReference type="STRING" id="83332.Rv1537"/>
<dbReference type="PaxDb" id="83332-Rv1537"/>
<dbReference type="DNASU" id="886414"/>
<dbReference type="GeneID" id="886414"/>
<dbReference type="KEGG" id="mtu:Rv1537"/>
<dbReference type="PATRIC" id="fig|83332.12.peg.1717"/>
<dbReference type="TubercuList" id="Rv1537"/>
<dbReference type="eggNOG" id="COG0389">
    <property type="taxonomic scope" value="Bacteria"/>
</dbReference>
<dbReference type="InParanoid" id="P9WNT3"/>
<dbReference type="OrthoDB" id="9808813at2"/>
<dbReference type="PhylomeDB" id="P9WNT3"/>
<dbReference type="Proteomes" id="UP000001584">
    <property type="component" value="Chromosome"/>
</dbReference>
<dbReference type="GO" id="GO:0005829">
    <property type="term" value="C:cytosol"/>
    <property type="evidence" value="ECO:0007005"/>
    <property type="project" value="MTBBASE"/>
</dbReference>
<dbReference type="GO" id="GO:0005886">
    <property type="term" value="C:plasma membrane"/>
    <property type="evidence" value="ECO:0007005"/>
    <property type="project" value="MTBBASE"/>
</dbReference>
<dbReference type="GO" id="GO:0003684">
    <property type="term" value="F:damaged DNA binding"/>
    <property type="evidence" value="ECO:0007669"/>
    <property type="project" value="InterPro"/>
</dbReference>
<dbReference type="GO" id="GO:0003887">
    <property type="term" value="F:DNA-directed DNA polymerase activity"/>
    <property type="evidence" value="ECO:0000318"/>
    <property type="project" value="GO_Central"/>
</dbReference>
<dbReference type="GO" id="GO:0000287">
    <property type="term" value="F:magnesium ion binding"/>
    <property type="evidence" value="ECO:0007669"/>
    <property type="project" value="UniProtKB-UniRule"/>
</dbReference>
<dbReference type="GO" id="GO:0006261">
    <property type="term" value="P:DNA-templated DNA replication"/>
    <property type="evidence" value="ECO:0007669"/>
    <property type="project" value="UniProtKB-UniRule"/>
</dbReference>
<dbReference type="GO" id="GO:0042276">
    <property type="term" value="P:error-prone translesion synthesis"/>
    <property type="evidence" value="ECO:0000318"/>
    <property type="project" value="GO_Central"/>
</dbReference>
<dbReference type="GO" id="GO:0009432">
    <property type="term" value="P:SOS response"/>
    <property type="evidence" value="ECO:0000318"/>
    <property type="project" value="GO_Central"/>
</dbReference>
<dbReference type="CDD" id="cd03586">
    <property type="entry name" value="PolY_Pol_IV_kappa"/>
    <property type="match status" value="1"/>
</dbReference>
<dbReference type="FunFam" id="1.10.150.20:FF:000068">
    <property type="entry name" value="DNA polymerase IV"/>
    <property type="match status" value="1"/>
</dbReference>
<dbReference type="FunFam" id="3.30.1490.100:FF:000020">
    <property type="entry name" value="DNA polymerase IV"/>
    <property type="match status" value="1"/>
</dbReference>
<dbReference type="Gene3D" id="3.30.70.270">
    <property type="match status" value="1"/>
</dbReference>
<dbReference type="Gene3D" id="3.40.1170.60">
    <property type="match status" value="1"/>
</dbReference>
<dbReference type="Gene3D" id="1.10.150.20">
    <property type="entry name" value="5' to 3' exonuclease, C-terminal subdomain"/>
    <property type="match status" value="1"/>
</dbReference>
<dbReference type="Gene3D" id="3.30.1490.100">
    <property type="entry name" value="DNA polymerase, Y-family, little finger domain"/>
    <property type="match status" value="1"/>
</dbReference>
<dbReference type="HAMAP" id="MF_01113">
    <property type="entry name" value="DNApol_IV"/>
    <property type="match status" value="1"/>
</dbReference>
<dbReference type="InterPro" id="IPR043502">
    <property type="entry name" value="DNA/RNA_pol_sf"/>
</dbReference>
<dbReference type="InterPro" id="IPR036775">
    <property type="entry name" value="DNA_pol_Y-fam_lit_finger_sf"/>
</dbReference>
<dbReference type="InterPro" id="IPR017961">
    <property type="entry name" value="DNA_pol_Y-fam_little_finger"/>
</dbReference>
<dbReference type="InterPro" id="IPR050116">
    <property type="entry name" value="DNA_polymerase-Y"/>
</dbReference>
<dbReference type="InterPro" id="IPR022880">
    <property type="entry name" value="DNApol_IV"/>
</dbReference>
<dbReference type="InterPro" id="IPR024728">
    <property type="entry name" value="PolY_HhH_motif"/>
</dbReference>
<dbReference type="InterPro" id="IPR043128">
    <property type="entry name" value="Rev_trsase/Diguanyl_cyclase"/>
</dbReference>
<dbReference type="InterPro" id="IPR001126">
    <property type="entry name" value="UmuC"/>
</dbReference>
<dbReference type="NCBIfam" id="NF002677">
    <property type="entry name" value="PRK02406.1"/>
    <property type="match status" value="1"/>
</dbReference>
<dbReference type="NCBIfam" id="NF002882">
    <property type="entry name" value="PRK03348.1"/>
    <property type="match status" value="1"/>
</dbReference>
<dbReference type="PANTHER" id="PTHR11076:SF33">
    <property type="entry name" value="DNA POLYMERASE KAPPA"/>
    <property type="match status" value="1"/>
</dbReference>
<dbReference type="PANTHER" id="PTHR11076">
    <property type="entry name" value="DNA REPAIR POLYMERASE UMUC / TRANSFERASE FAMILY MEMBER"/>
    <property type="match status" value="1"/>
</dbReference>
<dbReference type="Pfam" id="PF00817">
    <property type="entry name" value="IMS"/>
    <property type="match status" value="1"/>
</dbReference>
<dbReference type="Pfam" id="PF11799">
    <property type="entry name" value="IMS_C"/>
    <property type="match status" value="1"/>
</dbReference>
<dbReference type="Pfam" id="PF11798">
    <property type="entry name" value="IMS_HHH"/>
    <property type="match status" value="1"/>
</dbReference>
<dbReference type="SUPFAM" id="SSF56672">
    <property type="entry name" value="DNA/RNA polymerases"/>
    <property type="match status" value="1"/>
</dbReference>
<dbReference type="SUPFAM" id="SSF100879">
    <property type="entry name" value="Lesion bypass DNA polymerase (Y-family), little finger domain"/>
    <property type="match status" value="1"/>
</dbReference>
<dbReference type="PROSITE" id="PS50173">
    <property type="entry name" value="UMUC"/>
    <property type="match status" value="1"/>
</dbReference>
<organism>
    <name type="scientific">Mycobacterium tuberculosis (strain ATCC 25618 / H37Rv)</name>
    <dbReference type="NCBI Taxonomy" id="83332"/>
    <lineage>
        <taxon>Bacteria</taxon>
        <taxon>Bacillati</taxon>
        <taxon>Actinomycetota</taxon>
        <taxon>Actinomycetes</taxon>
        <taxon>Mycobacteriales</taxon>
        <taxon>Mycobacteriaceae</taxon>
        <taxon>Mycobacterium</taxon>
        <taxon>Mycobacterium tuberculosis complex</taxon>
    </lineage>
</organism>
<sequence>MESRWVLHLDMDAFFASVEQLTRPTLRGRPVLVGGLGGRGVVAGASYEARAYGARSAMPMHQARRLIGVTAVVLPPRGVVYGIASRRVFDTVRGLVPVVEQLSFDEAFAEPPQLAGAVAEDVETFCERLRRRVRDETGLIASVGAGSGKQIAKIASGLAKPDGIRVVRHAEEQALLSGLPVRRLWGIGPVAEEKLHRLGIETIGQLAALSDAEAANILGATIGPALHRLARGIDDRPVVERAEAKQISAESTFAVDLTTMEQLHEAIDSIAEHAHQRLLRDGRGARTITVKLKKSDMSTLTRSATMPYPTTDAGALFTVARRLLPDPLQIGPIRLLGVGFSGLSDIRQESLFADSDLTQETAAAHYVETPGAVVPAAHDATMWRVGDDVAHPELGHGWVQGAGHGVVTVRFETRGSGPGSARTFPVDTGDISNASPLDSLDWPDYIGQLSVEGSAGASAPTVDDVGDR</sequence>
<gene>
    <name type="primary">dinB1</name>
    <name type="synonym">dinX</name>
    <name type="ordered locus">Rv1537</name>
    <name type="ORF">MTCY48.28c</name>
</gene>
<feature type="chain" id="PRO_0000173924" description="DNA polymerase IV 1">
    <location>
        <begin position="1"/>
        <end position="468"/>
    </location>
</feature>
<feature type="domain" description="UmuC">
    <location>
        <begin position="6"/>
        <end position="188"/>
    </location>
</feature>
<feature type="active site" evidence="1">
    <location>
        <position position="106"/>
    </location>
</feature>
<feature type="binding site" evidence="1">
    <location>
        <position position="10"/>
    </location>
    <ligand>
        <name>Mg(2+)</name>
        <dbReference type="ChEBI" id="CHEBI:18420"/>
    </ligand>
</feature>
<feature type="binding site" evidence="1">
    <location>
        <position position="105"/>
    </location>
    <ligand>
        <name>Mg(2+)</name>
        <dbReference type="ChEBI" id="CHEBI:18420"/>
    </ligand>
</feature>
<feature type="site" description="Substrate discrimination" evidence="1">
    <location>
        <position position="15"/>
    </location>
</feature>
<reference key="1">
    <citation type="journal article" date="1998" name="Nature">
        <title>Deciphering the biology of Mycobacterium tuberculosis from the complete genome sequence.</title>
        <authorList>
            <person name="Cole S.T."/>
            <person name="Brosch R."/>
            <person name="Parkhill J."/>
            <person name="Garnier T."/>
            <person name="Churcher C.M."/>
            <person name="Harris D.E."/>
            <person name="Gordon S.V."/>
            <person name="Eiglmeier K."/>
            <person name="Gas S."/>
            <person name="Barry C.E. III"/>
            <person name="Tekaia F."/>
            <person name="Badcock K."/>
            <person name="Basham D."/>
            <person name="Brown D."/>
            <person name="Chillingworth T."/>
            <person name="Connor R."/>
            <person name="Davies R.M."/>
            <person name="Devlin K."/>
            <person name="Feltwell T."/>
            <person name="Gentles S."/>
            <person name="Hamlin N."/>
            <person name="Holroyd S."/>
            <person name="Hornsby T."/>
            <person name="Jagels K."/>
            <person name="Krogh A."/>
            <person name="McLean J."/>
            <person name="Moule S."/>
            <person name="Murphy L.D."/>
            <person name="Oliver S."/>
            <person name="Osborne J."/>
            <person name="Quail M.A."/>
            <person name="Rajandream M.A."/>
            <person name="Rogers J."/>
            <person name="Rutter S."/>
            <person name="Seeger K."/>
            <person name="Skelton S."/>
            <person name="Squares S."/>
            <person name="Squares R."/>
            <person name="Sulston J.E."/>
            <person name="Taylor K."/>
            <person name="Whitehead S."/>
            <person name="Barrell B.G."/>
        </authorList>
    </citation>
    <scope>NUCLEOTIDE SEQUENCE [LARGE SCALE GENOMIC DNA]</scope>
    <source>
        <strain>ATCC 25618 / H37Rv</strain>
    </source>
</reference>
<reference key="2">
    <citation type="journal article" date="2011" name="Mol. Cell. Proteomics">
        <title>Proteogenomic analysis of Mycobacterium tuberculosis by high resolution mass spectrometry.</title>
        <authorList>
            <person name="Kelkar D.S."/>
            <person name="Kumar D."/>
            <person name="Kumar P."/>
            <person name="Balakrishnan L."/>
            <person name="Muthusamy B."/>
            <person name="Yadav A.K."/>
            <person name="Shrivastava P."/>
            <person name="Marimuthu A."/>
            <person name="Anand S."/>
            <person name="Sundaram H."/>
            <person name="Kingsbury R."/>
            <person name="Harsha H.C."/>
            <person name="Nair B."/>
            <person name="Prasad T.S."/>
            <person name="Chauhan D.S."/>
            <person name="Katoch K."/>
            <person name="Katoch V.M."/>
            <person name="Kumar P."/>
            <person name="Chaerkady R."/>
            <person name="Ramachandran S."/>
            <person name="Dash D."/>
            <person name="Pandey A."/>
        </authorList>
    </citation>
    <scope>IDENTIFICATION BY MASS SPECTROMETRY [LARGE SCALE ANALYSIS]</scope>
    <source>
        <strain>ATCC 25618 / H37Rv</strain>
    </source>
</reference>
<proteinExistence type="evidence at protein level"/>
<accession>P9WNT3</accession>
<accession>L0T6Y5</accession>
<accession>P63985</accession>
<accession>Q10787</accession>
<comment type="function">
    <text evidence="1">Poorly processive, error-prone DNA polymerase involved in untargeted mutagenesis. Copies undamaged DNA at stalled replication forks, which arise in vivo from mismatched or misaligned primer ends. These misaligned primers can be extended by PolIV. Exhibits no 3'-5' exonuclease (proofreading) activity. May be involved in translesional synthesis, in conjunction with the beta clamp from PolIII (By similarity).</text>
</comment>
<comment type="catalytic activity">
    <reaction>
        <text>DNA(n) + a 2'-deoxyribonucleoside 5'-triphosphate = DNA(n+1) + diphosphate</text>
        <dbReference type="Rhea" id="RHEA:22508"/>
        <dbReference type="Rhea" id="RHEA-COMP:17339"/>
        <dbReference type="Rhea" id="RHEA-COMP:17340"/>
        <dbReference type="ChEBI" id="CHEBI:33019"/>
        <dbReference type="ChEBI" id="CHEBI:61560"/>
        <dbReference type="ChEBI" id="CHEBI:173112"/>
        <dbReference type="EC" id="2.7.7.7"/>
    </reaction>
</comment>
<comment type="cofactor">
    <cofactor evidence="1">
        <name>Mg(2+)</name>
        <dbReference type="ChEBI" id="CHEBI:18420"/>
    </cofactor>
    <text evidence="1">Binds 2 magnesium ions per subunit.</text>
</comment>
<comment type="subunit">
    <text evidence="1">Monomer.</text>
</comment>
<comment type="subcellular location">
    <subcellularLocation>
        <location evidence="1">Cytoplasm</location>
    </subcellularLocation>
</comment>
<comment type="similarity">
    <text evidence="2">Belongs to the DNA polymerase type-Y family.</text>
</comment>
<comment type="sequence caution" evidence="2">
    <conflict type="erroneous initiation">
        <sequence resource="EMBL-CDS" id="CCP44301"/>
    </conflict>
    <text>Truncated N-terminus.</text>
</comment>
<protein>
    <recommendedName>
        <fullName>DNA polymerase IV 1</fullName>
        <shortName>Pol IV 1</shortName>
        <ecNumber>2.7.7.7</ecNumber>
    </recommendedName>
</protein>